<organism>
    <name type="scientific">Bartonella henselae (strain ATCC 49882 / DSM 28221 / CCUG 30454 / Houston 1)</name>
    <name type="common">Rochalimaea henselae</name>
    <dbReference type="NCBI Taxonomy" id="283166"/>
    <lineage>
        <taxon>Bacteria</taxon>
        <taxon>Pseudomonadati</taxon>
        <taxon>Pseudomonadota</taxon>
        <taxon>Alphaproteobacteria</taxon>
        <taxon>Hyphomicrobiales</taxon>
        <taxon>Bartonellaceae</taxon>
        <taxon>Bartonella</taxon>
    </lineage>
</organism>
<accession>Q6G2F1</accession>
<feature type="chain" id="PRO_0000227093" description="Glycine dehydrogenase (decarboxylating)">
    <location>
        <begin position="1"/>
        <end position="931"/>
    </location>
</feature>
<feature type="modified residue" description="N6-(pyridoxal phosphate)lysine" evidence="1">
    <location>
        <position position="684"/>
    </location>
</feature>
<protein>
    <recommendedName>
        <fullName evidence="1">Glycine dehydrogenase (decarboxylating)</fullName>
        <ecNumber evidence="1">1.4.4.2</ecNumber>
    </recommendedName>
    <alternativeName>
        <fullName evidence="1">Glycine cleavage system P-protein</fullName>
    </alternativeName>
    <alternativeName>
        <fullName evidence="1">Glycine decarboxylase</fullName>
    </alternativeName>
    <alternativeName>
        <fullName evidence="1">Glycine dehydrogenase (aminomethyl-transferring)</fullName>
    </alternativeName>
</protein>
<gene>
    <name evidence="1" type="primary">gcvP</name>
    <name type="ordered locus">BH12820</name>
</gene>
<name>GCSP_BARHE</name>
<evidence type="ECO:0000255" key="1">
    <source>
        <dbReference type="HAMAP-Rule" id="MF_00711"/>
    </source>
</evidence>
<reference key="1">
    <citation type="journal article" date="2004" name="Proc. Natl. Acad. Sci. U.S.A.">
        <title>The louse-borne human pathogen Bartonella quintana is a genomic derivative of the zoonotic agent Bartonella henselae.</title>
        <authorList>
            <person name="Alsmark U.C.M."/>
            <person name="Frank A.C."/>
            <person name="Karlberg E.O."/>
            <person name="Legault B.-A."/>
            <person name="Ardell D.H."/>
            <person name="Canbaeck B."/>
            <person name="Eriksson A.-S."/>
            <person name="Naeslund A.K."/>
            <person name="Handley S.A."/>
            <person name="Huvet M."/>
            <person name="La Scola B."/>
            <person name="Holmberg M."/>
            <person name="Andersson S.G.E."/>
        </authorList>
    </citation>
    <scope>NUCLEOTIDE SEQUENCE [LARGE SCALE GENOMIC DNA]</scope>
    <source>
        <strain>ATCC 49882 / DSM 28221 / CCUG 30454 / Houston 1</strain>
    </source>
</reference>
<keyword id="KW-0560">Oxidoreductase</keyword>
<keyword id="KW-0663">Pyridoxal phosphate</keyword>
<proteinExistence type="inferred from homology"/>
<dbReference type="EC" id="1.4.4.2" evidence="1"/>
<dbReference type="EMBL" id="BX897699">
    <property type="protein sequence ID" value="CAF28056.1"/>
    <property type="molecule type" value="Genomic_DNA"/>
</dbReference>
<dbReference type="RefSeq" id="WP_011181096.1">
    <property type="nucleotide sequence ID" value="NC_005956.1"/>
</dbReference>
<dbReference type="SMR" id="Q6G2F1"/>
<dbReference type="PaxDb" id="283166-BH12820"/>
<dbReference type="EnsemblBacteria" id="CAF28056">
    <property type="protein sequence ID" value="CAF28056"/>
    <property type="gene ID" value="BH12820"/>
</dbReference>
<dbReference type="GeneID" id="92985894"/>
<dbReference type="KEGG" id="bhe:BH12820"/>
<dbReference type="eggNOG" id="COG0403">
    <property type="taxonomic scope" value="Bacteria"/>
</dbReference>
<dbReference type="eggNOG" id="COG1003">
    <property type="taxonomic scope" value="Bacteria"/>
</dbReference>
<dbReference type="OrthoDB" id="9801272at2"/>
<dbReference type="Proteomes" id="UP000000421">
    <property type="component" value="Chromosome"/>
</dbReference>
<dbReference type="GO" id="GO:0005829">
    <property type="term" value="C:cytosol"/>
    <property type="evidence" value="ECO:0007669"/>
    <property type="project" value="TreeGrafter"/>
</dbReference>
<dbReference type="GO" id="GO:0005960">
    <property type="term" value="C:glycine cleavage complex"/>
    <property type="evidence" value="ECO:0007669"/>
    <property type="project" value="TreeGrafter"/>
</dbReference>
<dbReference type="GO" id="GO:0016594">
    <property type="term" value="F:glycine binding"/>
    <property type="evidence" value="ECO:0007669"/>
    <property type="project" value="TreeGrafter"/>
</dbReference>
<dbReference type="GO" id="GO:0004375">
    <property type="term" value="F:glycine dehydrogenase (decarboxylating) activity"/>
    <property type="evidence" value="ECO:0007669"/>
    <property type="project" value="UniProtKB-EC"/>
</dbReference>
<dbReference type="GO" id="GO:0030170">
    <property type="term" value="F:pyridoxal phosphate binding"/>
    <property type="evidence" value="ECO:0007669"/>
    <property type="project" value="TreeGrafter"/>
</dbReference>
<dbReference type="GO" id="GO:0019464">
    <property type="term" value="P:glycine decarboxylation via glycine cleavage system"/>
    <property type="evidence" value="ECO:0007669"/>
    <property type="project" value="UniProtKB-UniRule"/>
</dbReference>
<dbReference type="CDD" id="cd00613">
    <property type="entry name" value="GDC-P"/>
    <property type="match status" value="2"/>
</dbReference>
<dbReference type="FunFam" id="3.90.1150.10:FF:000007">
    <property type="entry name" value="Glycine dehydrogenase (decarboxylating), mitochondrial"/>
    <property type="match status" value="1"/>
</dbReference>
<dbReference type="FunFam" id="3.40.640.10:FF:000007">
    <property type="entry name" value="glycine dehydrogenase (Decarboxylating), mitochondrial"/>
    <property type="match status" value="1"/>
</dbReference>
<dbReference type="Gene3D" id="3.90.1150.10">
    <property type="entry name" value="Aspartate Aminotransferase, domain 1"/>
    <property type="match status" value="2"/>
</dbReference>
<dbReference type="Gene3D" id="3.40.640.10">
    <property type="entry name" value="Type I PLP-dependent aspartate aminotransferase-like (Major domain)"/>
    <property type="match status" value="2"/>
</dbReference>
<dbReference type="HAMAP" id="MF_00711">
    <property type="entry name" value="GcvP"/>
    <property type="match status" value="1"/>
</dbReference>
<dbReference type="InterPro" id="IPR003437">
    <property type="entry name" value="GcvP"/>
</dbReference>
<dbReference type="InterPro" id="IPR049316">
    <property type="entry name" value="GDC-P_C"/>
</dbReference>
<dbReference type="InterPro" id="IPR049315">
    <property type="entry name" value="GDC-P_N"/>
</dbReference>
<dbReference type="InterPro" id="IPR020581">
    <property type="entry name" value="GDC_P"/>
</dbReference>
<dbReference type="InterPro" id="IPR015424">
    <property type="entry name" value="PyrdxlP-dep_Trfase"/>
</dbReference>
<dbReference type="InterPro" id="IPR015421">
    <property type="entry name" value="PyrdxlP-dep_Trfase_major"/>
</dbReference>
<dbReference type="InterPro" id="IPR015422">
    <property type="entry name" value="PyrdxlP-dep_Trfase_small"/>
</dbReference>
<dbReference type="NCBIfam" id="TIGR00461">
    <property type="entry name" value="gcvP"/>
    <property type="match status" value="1"/>
</dbReference>
<dbReference type="NCBIfam" id="NF001696">
    <property type="entry name" value="PRK00451.1"/>
    <property type="match status" value="1"/>
</dbReference>
<dbReference type="NCBIfam" id="NF003346">
    <property type="entry name" value="PRK04366.1"/>
    <property type="match status" value="1"/>
</dbReference>
<dbReference type="PANTHER" id="PTHR11773:SF1">
    <property type="entry name" value="GLYCINE DEHYDROGENASE (DECARBOXYLATING), MITOCHONDRIAL"/>
    <property type="match status" value="1"/>
</dbReference>
<dbReference type="PANTHER" id="PTHR11773">
    <property type="entry name" value="GLYCINE DEHYDROGENASE, DECARBOXYLATING"/>
    <property type="match status" value="1"/>
</dbReference>
<dbReference type="Pfam" id="PF21478">
    <property type="entry name" value="GcvP2_C"/>
    <property type="match status" value="1"/>
</dbReference>
<dbReference type="Pfam" id="PF02347">
    <property type="entry name" value="GDC-P"/>
    <property type="match status" value="2"/>
</dbReference>
<dbReference type="SUPFAM" id="SSF53383">
    <property type="entry name" value="PLP-dependent transferases"/>
    <property type="match status" value="2"/>
</dbReference>
<comment type="function">
    <text evidence="1">The glycine cleavage system catalyzes the degradation of glycine. The P protein binds the alpha-amino group of glycine through its pyridoxal phosphate cofactor; CO(2) is released and the remaining methylamine moiety is then transferred to the lipoamide cofactor of the H protein.</text>
</comment>
<comment type="catalytic activity">
    <reaction evidence="1">
        <text>N(6)-[(R)-lipoyl]-L-lysyl-[glycine-cleavage complex H protein] + glycine + H(+) = N(6)-[(R)-S(8)-aminomethyldihydrolipoyl]-L-lysyl-[glycine-cleavage complex H protein] + CO2</text>
        <dbReference type="Rhea" id="RHEA:24304"/>
        <dbReference type="Rhea" id="RHEA-COMP:10494"/>
        <dbReference type="Rhea" id="RHEA-COMP:10495"/>
        <dbReference type="ChEBI" id="CHEBI:15378"/>
        <dbReference type="ChEBI" id="CHEBI:16526"/>
        <dbReference type="ChEBI" id="CHEBI:57305"/>
        <dbReference type="ChEBI" id="CHEBI:83099"/>
        <dbReference type="ChEBI" id="CHEBI:83143"/>
        <dbReference type="EC" id="1.4.4.2"/>
    </reaction>
</comment>
<comment type="cofactor">
    <cofactor evidence="1">
        <name>pyridoxal 5'-phosphate</name>
        <dbReference type="ChEBI" id="CHEBI:597326"/>
    </cofactor>
</comment>
<comment type="subunit">
    <text evidence="1">The glycine cleavage system is composed of four proteins: P, T, L and H.</text>
</comment>
<comment type="similarity">
    <text evidence="1">Belongs to the GcvP family.</text>
</comment>
<sequence>MLERPFFSRHIGLRPDEKQKMLDIVAVDSIDTLVSQALPHSIHLGRPLNLPKAVSEGQALEELSKMMERNYLHKSFIGQGYHGTYVPPVILRNLFENPAWYTAYTPYQAEISQGRLELLFYFQTLISELTGLPVAAASLLDEATALAEAITVAFRFTREKKMKISLQSLLHPQILSVVQTRAETQGLQVSKNSEICSDTAAIVLSWPDTKGSFNDYSEVIKEAKAKGALVIVVADPLALTLMEAPAKWGADIVVGSMQRYGVPMGFGGPHAGYLAVSDALTRLIPGRIVGQSVDTKGRVGFRLALQTREQHIRRDKATSNICTAQALLANMATAYAVWHGPQGLQEIAQRVHHLTCRFVGGLEAVGISCEGEYFFDCVSIVVKGKAREIACQAKAGGRLIRVLDDDRVVINFDELSTQEDAHALAQLFGAGLVDQASPRLMGKGRDTTFLSQPFFHAVHSETDMMRFLRRLSDKDLALDRAMIPLGSCTMKLNAAAELMPVSWPTVANIHPFASREDAVGYQEMIHQLNAWLCEITGFAQVSFQPNSGAQGEYAGLLAIRRYHQSRGEHQRTLCLIPASAHGTNPASAHMAGMEVVVVKCLNDGDVDLDDLKMKAQLYKERLAALMITYPSTHGVYEESIKDICSLIHENGGQVYFDGANLNALVGLARPADIGADVCHMNLHKTFAIPHGGGGPGVGPIGVVEHLKPFLPGHEQEGTTHAVSAAPYGSASILVITWMYIRMMGAEGLKYATQTAILNANYIAARLSQVYSILYRGKHGRVAHECIVDTRVLKEQYGVSVDDIAKRLIDYGFHAPTMSFPVPGTLMIEPTESEPKAEIDRFCDALLSIAEEAKKIGSGVWPKDDNPLVHAPHTLVDTLDDTWARPYSRQEAAFPNCSLDPANKYWPPVSRIDNVAGDRMLICSCPPLGNTY</sequence>